<sequence length="437" mass="48708">MGKHHVTLCCVVFAVLCLASSLAQAQVLFQGFNWESWRKQGGWYNFLHEKVEEIASTGATHVWLPPPSHSVSPQGYMPGRLYDLDASKYGTEAELKSLIEAFHDKNVECLADIVINHRCADYKDSRGVYCVFEGGTPDGRLDWGPDMICSDDTQYSNGRGHRDTGAGFGAAPDIDHLNPRVQRELTDWLNWLRTDLGFDGWRLDFAKGYSAPLARIYVDNTNPTFVVGEIWSSLIYNGDGKPSTNQDADRQELVNWVEGVGKPATAFDFTTKGILQAAVQGELWRLHDGNGKAPGLMGWMPDQAVTFVDNHDTGSTQSLWPFPSDKVMQGYAYILTHPGIPCIFYDHVFDWNLQHEIATLAEIRSRNGIHAESTLDILKAEGDIYVAMIDGKVITKLGPRYDAGGIIPSDFHVVAHGNDYCVWEKEGLRVPAGRKHY</sequence>
<organism>
    <name type="scientific">Oryza sativa subsp. japonica</name>
    <name type="common">Rice</name>
    <dbReference type="NCBI Taxonomy" id="39947"/>
    <lineage>
        <taxon>Eukaryota</taxon>
        <taxon>Viridiplantae</taxon>
        <taxon>Streptophyta</taxon>
        <taxon>Embryophyta</taxon>
        <taxon>Tracheophyta</taxon>
        <taxon>Spermatophyta</taxon>
        <taxon>Magnoliopsida</taxon>
        <taxon>Liliopsida</taxon>
        <taxon>Poales</taxon>
        <taxon>Poaceae</taxon>
        <taxon>BOP clade</taxon>
        <taxon>Oryzoideae</taxon>
        <taxon>Oryzeae</taxon>
        <taxon>Oryzinae</taxon>
        <taxon>Oryza</taxon>
        <taxon>Oryza sativa</taxon>
    </lineage>
</organism>
<gene>
    <name type="primary">AMY1.4</name>
    <name type="synonym">AMY3E</name>
    <name type="ordered locus">Os08g0473600</name>
    <name type="ordered locus">LOC_Os08g36900</name>
    <name type="ORF">P0013B04.34-1</name>
    <name type="ORF">P0451G12.3-1</name>
</gene>
<keyword id="KW-0025">Alternative splicing</keyword>
<keyword id="KW-0106">Calcium</keyword>
<keyword id="KW-0119">Carbohydrate metabolism</keyword>
<keyword id="KW-0326">Glycosidase</keyword>
<keyword id="KW-0378">Hydrolase</keyword>
<keyword id="KW-0479">Metal-binding</keyword>
<keyword id="KW-1185">Reference proteome</keyword>
<keyword id="KW-0732">Signal</keyword>
<reference key="1">
    <citation type="journal article" date="1990" name="Nucleic Acids Res.">
        <title>Structural organization and differential expression of rice alpha-amylase genes.</title>
        <authorList>
            <person name="Huang N."/>
            <person name="Koizumi N."/>
            <person name="Reinl S.J."/>
            <person name="Rodriguez R.L."/>
        </authorList>
    </citation>
    <scope>NUCLEOTIDE SEQUENCE [GENOMIC DNA]</scope>
    <source>
        <strain>cv. M202</strain>
        <tissue>Etiolated leaf</tissue>
    </source>
</reference>
<reference key="2">
    <citation type="journal article" date="2005" name="Nature">
        <title>The map-based sequence of the rice genome.</title>
        <authorList>
            <consortium name="International rice genome sequencing project (IRGSP)"/>
        </authorList>
    </citation>
    <scope>NUCLEOTIDE SEQUENCE [LARGE SCALE GENOMIC DNA]</scope>
    <source>
        <strain>cv. Nipponbare</strain>
    </source>
</reference>
<reference key="3">
    <citation type="journal article" date="2013" name="Rice">
        <title>Improvement of the Oryza sativa Nipponbare reference genome using next generation sequence and optical map data.</title>
        <authorList>
            <person name="Kawahara Y."/>
            <person name="de la Bastide M."/>
            <person name="Hamilton J.P."/>
            <person name="Kanamori H."/>
            <person name="McCombie W.R."/>
            <person name="Ouyang S."/>
            <person name="Schwartz D.C."/>
            <person name="Tanaka T."/>
            <person name="Wu J."/>
            <person name="Zhou S."/>
            <person name="Childs K.L."/>
            <person name="Davidson R.M."/>
            <person name="Lin H."/>
            <person name="Quesada-Ocampo L."/>
            <person name="Vaillancourt B."/>
            <person name="Sakai H."/>
            <person name="Lee S.S."/>
            <person name="Kim J."/>
            <person name="Numa H."/>
            <person name="Itoh T."/>
            <person name="Buell C.R."/>
            <person name="Matsumoto T."/>
        </authorList>
    </citation>
    <scope>GENOME REANNOTATION</scope>
    <source>
        <strain>cv. Nipponbare</strain>
    </source>
</reference>
<reference key="4">
    <citation type="journal article" date="2003" name="Science">
        <title>Collection, mapping, and annotation of over 28,000 cDNA clones from japonica rice.</title>
        <authorList>
            <consortium name="The rice full-length cDNA consortium"/>
        </authorList>
    </citation>
    <scope>NUCLEOTIDE SEQUENCE [LARGE SCALE MRNA] (ISOFORMS 1 AND 2)</scope>
    <source>
        <strain>cv. Nipponbare</strain>
    </source>
</reference>
<dbReference type="EC" id="3.2.1.1" evidence="2"/>
<dbReference type="EMBL" id="M59352">
    <property type="protein sequence ID" value="AAA33896.1"/>
    <property type="molecule type" value="Genomic_DNA"/>
</dbReference>
<dbReference type="EMBL" id="AP004399">
    <property type="protein sequence ID" value="BAD09334.1"/>
    <property type="molecule type" value="Genomic_DNA"/>
</dbReference>
<dbReference type="EMBL" id="AP004399">
    <property type="protein sequence ID" value="BAD73794.1"/>
    <property type="status" value="ALT_SEQ"/>
    <property type="molecule type" value="Genomic_DNA"/>
</dbReference>
<dbReference type="EMBL" id="AP004457">
    <property type="protein sequence ID" value="BAD09374.1"/>
    <property type="molecule type" value="Genomic_DNA"/>
</dbReference>
<dbReference type="EMBL" id="AP004457">
    <property type="protein sequence ID" value="BAD73796.1"/>
    <property type="status" value="ALT_SEQ"/>
    <property type="molecule type" value="Genomic_DNA"/>
</dbReference>
<dbReference type="EMBL" id="AP014964">
    <property type="protein sequence ID" value="BAT05857.1"/>
    <property type="molecule type" value="Genomic_DNA"/>
</dbReference>
<dbReference type="EMBL" id="AP014964">
    <property type="protein sequence ID" value="BAT05858.1"/>
    <property type="molecule type" value="Genomic_DNA"/>
</dbReference>
<dbReference type="EMBL" id="AK064071">
    <property type="status" value="NOT_ANNOTATED_CDS"/>
    <property type="molecule type" value="mRNA"/>
</dbReference>
<dbReference type="EMBL" id="AK103413">
    <property type="status" value="NOT_ANNOTATED_CDS"/>
    <property type="molecule type" value="mRNA"/>
</dbReference>
<dbReference type="PIR" id="JT0946">
    <property type="entry name" value="JT0946"/>
</dbReference>
<dbReference type="RefSeq" id="XP_015650698.1">
    <property type="nucleotide sequence ID" value="XM_015795212.1"/>
</dbReference>
<dbReference type="SMR" id="P27934"/>
<dbReference type="FunCoup" id="P27934">
    <property type="interactions" value="258"/>
</dbReference>
<dbReference type="STRING" id="39947.P27934"/>
<dbReference type="CAZy" id="GH13">
    <property type="family name" value="Glycoside Hydrolase Family 13"/>
</dbReference>
<dbReference type="PaxDb" id="39947-P27934"/>
<dbReference type="EnsemblPlants" id="Os08t0473600-01">
    <molecule id="P27934-1"/>
    <property type="protein sequence ID" value="Os08t0473600-01"/>
    <property type="gene ID" value="Os08g0473600"/>
</dbReference>
<dbReference type="Gramene" id="Os08t0473600-01">
    <molecule id="P27934-1"/>
    <property type="protein sequence ID" value="Os08t0473600-01"/>
    <property type="gene ID" value="Os08g0473600"/>
</dbReference>
<dbReference type="eggNOG" id="KOG0471">
    <property type="taxonomic scope" value="Eukaryota"/>
</dbReference>
<dbReference type="HOGENOM" id="CLU_030069_1_0_1"/>
<dbReference type="InParanoid" id="P27934"/>
<dbReference type="OMA" id="DERVICK"/>
<dbReference type="OrthoDB" id="550577at2759"/>
<dbReference type="Proteomes" id="UP000000763">
    <property type="component" value="Chromosome 8"/>
</dbReference>
<dbReference type="Proteomes" id="UP000059680">
    <property type="component" value="Chromosome 8"/>
</dbReference>
<dbReference type="ExpressionAtlas" id="P27934">
    <property type="expression patterns" value="baseline and differential"/>
</dbReference>
<dbReference type="GO" id="GO:0004556">
    <property type="term" value="F:alpha-amylase activity"/>
    <property type="evidence" value="ECO:0000250"/>
    <property type="project" value="Gramene"/>
</dbReference>
<dbReference type="GO" id="GO:0005509">
    <property type="term" value="F:calcium ion binding"/>
    <property type="evidence" value="ECO:0007669"/>
    <property type="project" value="InterPro"/>
</dbReference>
<dbReference type="GO" id="GO:0005983">
    <property type="term" value="P:starch catabolic process"/>
    <property type="evidence" value="ECO:0000250"/>
    <property type="project" value="Gramene"/>
</dbReference>
<dbReference type="GO" id="GO:0005987">
    <property type="term" value="P:sucrose catabolic process"/>
    <property type="evidence" value="ECO:0000250"/>
    <property type="project" value="Gramene"/>
</dbReference>
<dbReference type="CDD" id="cd11314">
    <property type="entry name" value="AmyAc_arch_bac_plant_AmyA"/>
    <property type="match status" value="1"/>
</dbReference>
<dbReference type="FunFam" id="2.60.40.1180:FF:000021">
    <property type="entry name" value="Alpha-amylase"/>
    <property type="match status" value="1"/>
</dbReference>
<dbReference type="Gene3D" id="3.20.20.80">
    <property type="entry name" value="Glycosidases"/>
    <property type="match status" value="1"/>
</dbReference>
<dbReference type="Gene3D" id="2.60.40.1180">
    <property type="entry name" value="Golgi alpha-mannosidase II"/>
    <property type="match status" value="1"/>
</dbReference>
<dbReference type="InterPro" id="IPR012850">
    <property type="entry name" value="A-amylase_bs_C"/>
</dbReference>
<dbReference type="InterPro" id="IPR013775">
    <property type="entry name" value="A-amylase_pln"/>
</dbReference>
<dbReference type="InterPro" id="IPR006046">
    <property type="entry name" value="Alpha_amylase"/>
</dbReference>
<dbReference type="InterPro" id="IPR006047">
    <property type="entry name" value="Glyco_hydro_13_cat_dom"/>
</dbReference>
<dbReference type="InterPro" id="IPR013780">
    <property type="entry name" value="Glyco_hydro_b"/>
</dbReference>
<dbReference type="InterPro" id="IPR017853">
    <property type="entry name" value="Glycoside_hydrolase_SF"/>
</dbReference>
<dbReference type="PANTHER" id="PTHR43447">
    <property type="entry name" value="ALPHA-AMYLASE"/>
    <property type="match status" value="1"/>
</dbReference>
<dbReference type="Pfam" id="PF07821">
    <property type="entry name" value="Alpha-amyl_C2"/>
    <property type="match status" value="1"/>
</dbReference>
<dbReference type="Pfam" id="PF00128">
    <property type="entry name" value="Alpha-amylase"/>
    <property type="match status" value="1"/>
</dbReference>
<dbReference type="PIRSF" id="PIRSF001028">
    <property type="entry name" value="Alph-amls_plant"/>
    <property type="match status" value="1"/>
</dbReference>
<dbReference type="PRINTS" id="PR00110">
    <property type="entry name" value="ALPHAAMYLASE"/>
</dbReference>
<dbReference type="SMART" id="SM00642">
    <property type="entry name" value="Aamy"/>
    <property type="match status" value="1"/>
</dbReference>
<dbReference type="SMART" id="SM00810">
    <property type="entry name" value="Alpha-amyl_C2"/>
    <property type="match status" value="1"/>
</dbReference>
<dbReference type="SUPFAM" id="SSF51445">
    <property type="entry name" value="(Trans)glycosidases"/>
    <property type="match status" value="1"/>
</dbReference>
<dbReference type="SUPFAM" id="SSF51011">
    <property type="entry name" value="Glycosyl hydrolase domain"/>
    <property type="match status" value="1"/>
</dbReference>
<feature type="signal peptide" evidence="4">
    <location>
        <begin position="1"/>
        <end position="25"/>
    </location>
</feature>
<feature type="chain" id="PRO_0000001416" description="Alpha-amylase isozyme 3E">
    <location>
        <begin position="26"/>
        <end position="437"/>
    </location>
</feature>
<feature type="active site" description="Nucleophile" evidence="2">
    <location>
        <position position="204"/>
    </location>
</feature>
<feature type="active site" description="Proton donor" evidence="2">
    <location>
        <position position="229"/>
    </location>
</feature>
<feature type="binding site" evidence="2">
    <location>
        <begin position="69"/>
        <end position="71"/>
    </location>
    <ligand>
        <name>substrate</name>
    </ligand>
</feature>
<feature type="binding site" evidence="2">
    <location>
        <begin position="76"/>
        <end position="77"/>
    </location>
    <ligand>
        <name>substrate</name>
    </ligand>
</feature>
<feature type="binding site" evidence="2">
    <location>
        <position position="116"/>
    </location>
    <ligand>
        <name>Ca(2+)</name>
        <dbReference type="ChEBI" id="CHEBI:29108"/>
        <label>1</label>
    </ligand>
</feature>
<feature type="binding site" evidence="2">
    <location>
        <position position="133"/>
    </location>
    <ligand>
        <name>Ca(2+)</name>
        <dbReference type="ChEBI" id="CHEBI:29108"/>
        <label>2</label>
    </ligand>
</feature>
<feature type="binding site" evidence="2">
    <location>
        <position position="136"/>
    </location>
    <ligand>
        <name>Ca(2+)</name>
        <dbReference type="ChEBI" id="CHEBI:29108"/>
        <label>2</label>
    </ligand>
</feature>
<feature type="binding site" evidence="2">
    <location>
        <position position="138"/>
    </location>
    <ligand>
        <name>Ca(2+)</name>
        <dbReference type="ChEBI" id="CHEBI:29108"/>
        <label>2</label>
    </ligand>
</feature>
<feature type="binding site" evidence="2">
    <location>
        <position position="142"/>
    </location>
    <ligand>
        <name>Ca(2+)</name>
        <dbReference type="ChEBI" id="CHEBI:29108"/>
        <label>2</label>
    </ligand>
</feature>
<feature type="binding site" evidence="2">
    <location>
        <position position="152"/>
    </location>
    <ligand>
        <name>Ca(2+)</name>
        <dbReference type="ChEBI" id="CHEBI:29108"/>
        <label>3</label>
    </ligand>
</feature>
<feature type="binding site" evidence="2">
    <location>
        <position position="163"/>
    </location>
    <ligand>
        <name>Ca(2+)</name>
        <dbReference type="ChEBI" id="CHEBI:29108"/>
        <label>1</label>
    </ligand>
</feature>
<feature type="binding site" evidence="2">
    <location>
        <position position="166"/>
    </location>
    <ligand>
        <name>Ca(2+)</name>
        <dbReference type="ChEBI" id="CHEBI:29108"/>
        <label>1</label>
    </ligand>
</feature>
<feature type="binding site" evidence="2">
    <location>
        <position position="168"/>
    </location>
    <ligand>
        <name>Ca(2+)</name>
        <dbReference type="ChEBI" id="CHEBI:29108"/>
        <label>3</label>
    </ligand>
</feature>
<feature type="binding site" evidence="2">
    <location>
        <position position="171"/>
    </location>
    <ligand>
        <name>Ca(2+)</name>
        <dbReference type="ChEBI" id="CHEBI:29108"/>
        <label>3</label>
    </ligand>
</feature>
<feature type="binding site" evidence="2">
    <location>
        <position position="173"/>
    </location>
    <ligand>
        <name>Ca(2+)</name>
        <dbReference type="ChEBI" id="CHEBI:29108"/>
        <label>1</label>
    </ligand>
</feature>
<feature type="binding site" evidence="2">
    <location>
        <position position="173"/>
    </location>
    <ligand>
        <name>Ca(2+)</name>
        <dbReference type="ChEBI" id="CHEBI:29108"/>
        <label>3</label>
    </ligand>
</feature>
<feature type="binding site" evidence="2">
    <location>
        <begin position="202"/>
        <end position="207"/>
    </location>
    <ligand>
        <name>substrate</name>
    </ligand>
</feature>
<feature type="binding site" evidence="2">
    <location>
        <position position="208"/>
    </location>
    <ligand>
        <name>Ca(2+)</name>
        <dbReference type="ChEBI" id="CHEBI:29108"/>
        <label>1</label>
    </ligand>
</feature>
<feature type="binding site" evidence="2">
    <location>
        <position position="231"/>
    </location>
    <ligand>
        <name>substrate</name>
    </ligand>
</feature>
<feature type="binding site" evidence="3">
    <location>
        <position position="233"/>
    </location>
    <ligand>
        <name>substrate</name>
    </ligand>
</feature>
<feature type="binding site" evidence="2">
    <location>
        <position position="251"/>
    </location>
    <ligand>
        <name>substrate</name>
    </ligand>
</feature>
<feature type="binding site" evidence="2">
    <location>
        <position position="292"/>
    </location>
    <ligand>
        <name>substrate</name>
    </ligand>
</feature>
<feature type="binding site" evidence="2">
    <location>
        <begin position="298"/>
        <end position="300"/>
    </location>
    <ligand>
        <name>substrate</name>
    </ligand>
</feature>
<feature type="binding site" evidence="2">
    <location>
        <position position="311"/>
    </location>
    <ligand>
        <name>substrate</name>
    </ligand>
</feature>
<feature type="binding site" evidence="2">
    <location>
        <position position="317"/>
    </location>
    <ligand>
        <name>substrate</name>
    </ligand>
</feature>
<feature type="binding site" evidence="2">
    <location>
        <position position="396"/>
    </location>
    <ligand>
        <name>substrate</name>
    </ligand>
</feature>
<feature type="binding site" evidence="2">
    <location>
        <begin position="401"/>
        <end position="403"/>
    </location>
    <ligand>
        <name>substrate</name>
    </ligand>
</feature>
<feature type="binding site" evidence="2">
    <location>
        <begin position="413"/>
        <end position="419"/>
    </location>
    <ligand>
        <name>substrate</name>
    </ligand>
</feature>
<feature type="binding site" evidence="2">
    <location>
        <position position="423"/>
    </location>
    <ligand>
        <name>substrate</name>
    </ligand>
</feature>
<feature type="site" description="Transition state stabilizer" evidence="2">
    <location>
        <position position="312"/>
    </location>
</feature>
<feature type="splice variant" id="VSP_016022" description="In isoform 2." evidence="5">
    <original>TFVVGEIWSS</original>
    <variation>ASWGGCPIRP</variation>
    <location>
        <begin position="224"/>
        <end position="233"/>
    </location>
</feature>
<feature type="splice variant" id="VSP_016023" description="In isoform 2." evidence="5">
    <location>
        <begin position="234"/>
        <end position="437"/>
    </location>
</feature>
<protein>
    <recommendedName>
        <fullName>Alpha-amylase isozyme 3E</fullName>
        <ecNumber evidence="2">3.2.1.1</ecNumber>
    </recommendedName>
    <alternativeName>
        <fullName>1,4-alpha-D-glucan glucanohydrolase</fullName>
    </alternativeName>
</protein>
<comment type="function">
    <text>Important for breakdown of endosperm starch during germination.</text>
</comment>
<comment type="catalytic activity">
    <reaction evidence="2">
        <text>Endohydrolysis of (1-&gt;4)-alpha-D-glucosidic linkages in polysaccharides containing three or more (1-&gt;4)-alpha-linked D-glucose units.</text>
        <dbReference type="EC" id="3.2.1.1"/>
    </reaction>
</comment>
<comment type="cofactor">
    <cofactor evidence="2">
        <name>Ca(2+)</name>
        <dbReference type="ChEBI" id="CHEBI:29108"/>
    </cofactor>
    <text evidence="2">Binds 3 Ca(2+) ions per subunit.</text>
</comment>
<comment type="subunit">
    <text>Monomer.</text>
</comment>
<comment type="alternative products">
    <event type="alternative splicing"/>
    <isoform>
        <id>P27934-1</id>
        <name>1</name>
        <sequence type="displayed"/>
    </isoform>
    <isoform>
        <id>P27934-2</id>
        <name>2</name>
        <sequence type="described" ref="VSP_016022 VSP_016023"/>
    </isoform>
</comment>
<comment type="tissue specificity">
    <text>More abundant in germinating seeds than in young roots, young leaves and callus.</text>
</comment>
<comment type="developmental stage">
    <text>Expressed at a high level during germination in the aleurones cells under the control of the plant hormone gibberellic acid and in the developing grains at a low level.</text>
</comment>
<comment type="miscellaneous">
    <text evidence="1">Binds starch not only at the active site, but also via accessory binding sites on the protein surface that are important for efficient binding to starch granules and thereby increase enzyme activity.</text>
</comment>
<comment type="similarity">
    <text evidence="6">Belongs to the glycosyl hydrolase 13 family.</text>
</comment>
<comment type="sequence caution" evidence="6">
    <conflict type="erroneous gene model prediction">
        <sequence resource="EMBL-CDS" id="BAD73794"/>
    </conflict>
</comment>
<comment type="sequence caution" evidence="6">
    <conflict type="erroneous gene model prediction">
        <sequence resource="EMBL-CDS" id="BAD73796"/>
    </conflict>
</comment>
<proteinExistence type="evidence at transcript level"/>
<name>AMY3E_ORYSJ</name>
<accession>P27934</accession>
<accession>Q5QLB2</accession>
<accession>Q6ZDD6</accession>
<evidence type="ECO:0000250" key="1"/>
<evidence type="ECO:0000250" key="2">
    <source>
        <dbReference type="UniProtKB" id="P00693"/>
    </source>
</evidence>
<evidence type="ECO:0000250" key="3">
    <source>
        <dbReference type="UniProtKB" id="P04063"/>
    </source>
</evidence>
<evidence type="ECO:0000255" key="4"/>
<evidence type="ECO:0000303" key="5">
    <source>
    </source>
</evidence>
<evidence type="ECO:0000305" key="6"/>